<name>TS101_MOUSE</name>
<proteinExistence type="evidence at protein level"/>
<comment type="function">
    <text evidence="3">Component of the ESCRT-I complex, a regulator of vesicular trafficking process. Binds to ubiquitinated cargo proteins and is required for the sorting of endocytic ubiquitinated cargos into multivesicular bodies (MVBs). Mediates the association between the ESCRT-0 and ESCRT-I complex. Required for completion of cytokinesis; the function requires CEP55. May be involved in cell growth and differentiation. Acts as a negative growth regulator. Required for the exosomal release of SDCBP, CD63 and syndecan (By similarity). It may also play a role in the extracellular release of microvesicles that differ from the exosomes (By similarity).</text>
</comment>
<comment type="subunit">
    <text evidence="2 3 8 9 10 11 12">Component of the ESCRT-I complex (endosomal sorting complex required for transport I) which consists of TSG101, VPS28, a VPS37 protein (VPS37A to -D) and MVB12A or MVB12B in a 1:1:1:1 stoichiometry. Interacts with VPS37A, VPS37B and VPS37C. Component of an ESCRT-I complex (endosomal sorting complex required for transport I) which consists of TSG101, VPS28, VPS37A and UBAP1 in a 1:1:1:1 stoichiometry. Interacts with DMAP1 (PubMed:10888872). Interacts with GMCL (PubMed:12927808). Interacts with ubiquitin, stathmin and AATF (By similarity). Interacts with HGS; the interaction mediates the association with the ESCRT-0 complex (PubMed:12802020). Interacts with GGA1 and GGA3. Interacts (via UEV domain) with PDCD6IP/AIP1. Interacts with VPS28, SNF8 and VPS36. Self-associates. Interacts with MVB12A; the association appears to be mediated by the TSG101-VPS37 binary subcomplex. Interacts with VPS37D. Interacts with LRSAM1. Interacts with CEP55; the interaction is required for cytokinesis (By similarity). Interacts with PDCD6. Interacts with LITAF (By similarity). Interacts with murine leukemia virus Gag polyprotein (via PSAP motif) (PubMed:15908698). Interacts with MGRN1 (PubMed:19703557). Interacts with ARRDC1; recruits TSG101 to the plasma membrane (By similarity).</text>
</comment>
<comment type="subcellular location">
    <subcellularLocation>
        <location evidence="3">Cytoplasm</location>
    </subcellularLocation>
    <subcellularLocation>
        <location evidence="3">Early endosome membrane</location>
        <topology evidence="3">Peripheral membrane protein</topology>
        <orientation evidence="3">Cytoplasmic side</orientation>
    </subcellularLocation>
    <subcellularLocation>
        <location evidence="3">Late endosome membrane</location>
        <topology evidence="3">Peripheral membrane protein</topology>
    </subcellularLocation>
    <subcellularLocation>
        <location evidence="3">Cytoplasm</location>
        <location evidence="3">Cytoskeleton</location>
        <location evidence="3">Microtubule organizing center</location>
        <location evidence="3">Centrosome</location>
    </subcellularLocation>
    <subcellularLocation>
        <location evidence="3">Midbody</location>
        <location evidence="3">Midbody ring</location>
    </subcellularLocation>
    <subcellularLocation>
        <location evidence="3">Nucleus</location>
    </subcellularLocation>
    <text evidence="3">Mainly cytoplasmic. Membrane-associated when active and soluble when inactive. Nuclear localization is cell cycle-dependent. Interaction with CEP55 is required for localization to the midbody during cytokinesis.</text>
</comment>
<comment type="tissue specificity">
    <text>Ubiquitous. Higher expression in brain and mammary gland. Lower expression in liver and tumoral tissues.</text>
</comment>
<comment type="developmental stage">
    <text>Expressed at all stages of mammary gland development, but at lower rate at early and mid pregnancy. Expressed in 1-cell and 2-cell stage embryos.</text>
</comment>
<comment type="domain">
    <text>The UEV domain is required for the interaction of the complex with ubiquitin.</text>
</comment>
<comment type="domain">
    <text>The coiled coil domain may interact with stathmin.</text>
</comment>
<comment type="PTM">
    <text evidence="3">Monoubiquitinated at multiple sites by LRSAM1 and by MGRN1. Ubiquitination inactivates it, possibly by regulating its shuttling between an active membrane-bound protein and an inactive soluble form. Ubiquitination by MGRN1 requires the presence of UBE2D1.</text>
</comment>
<comment type="similarity">
    <text evidence="13">Belongs to the ubiquitin-conjugating enzyme family. UEV subfamily.</text>
</comment>
<dbReference type="EMBL" id="U52945">
    <property type="protein sequence ID" value="AAC53586.1"/>
    <property type="molecule type" value="mRNA"/>
</dbReference>
<dbReference type="EMBL" id="AF060868">
    <property type="protein sequence ID" value="AAC83576.1"/>
    <property type="molecule type" value="Genomic_DNA"/>
</dbReference>
<dbReference type="EMBL" id="BC005424">
    <property type="protein sequence ID" value="AAH05424.1"/>
    <property type="molecule type" value="mRNA"/>
</dbReference>
<dbReference type="EMBL" id="BC085308">
    <property type="protein sequence ID" value="AAH85308.1"/>
    <property type="molecule type" value="mRNA"/>
</dbReference>
<dbReference type="CCDS" id="CCDS21291.1"/>
<dbReference type="RefSeq" id="NP_068684.1">
    <property type="nucleotide sequence ID" value="NM_021884.5"/>
</dbReference>
<dbReference type="SMR" id="Q61187"/>
<dbReference type="BioGRID" id="204341">
    <property type="interactions" value="56"/>
</dbReference>
<dbReference type="ELM" id="Q61187"/>
<dbReference type="FunCoup" id="Q61187">
    <property type="interactions" value="3676"/>
</dbReference>
<dbReference type="IntAct" id="Q61187">
    <property type="interactions" value="24"/>
</dbReference>
<dbReference type="MINT" id="Q61187"/>
<dbReference type="STRING" id="10090.ENSMUSP00000014546"/>
<dbReference type="GlyGen" id="Q61187">
    <property type="glycosylation" value="1 site, 1 O-linked glycan (1 site)"/>
</dbReference>
<dbReference type="iPTMnet" id="Q61187"/>
<dbReference type="PhosphoSitePlus" id="Q61187"/>
<dbReference type="SwissPalm" id="Q61187"/>
<dbReference type="jPOST" id="Q61187"/>
<dbReference type="PaxDb" id="10090-ENSMUSP00000014546"/>
<dbReference type="ProteomicsDB" id="300031"/>
<dbReference type="Pumba" id="Q61187"/>
<dbReference type="Antibodypedia" id="1752">
    <property type="antibodies" value="510 antibodies from 40 providers"/>
</dbReference>
<dbReference type="DNASU" id="22088"/>
<dbReference type="Ensembl" id="ENSMUST00000014546.15">
    <property type="protein sequence ID" value="ENSMUSP00000014546.9"/>
    <property type="gene ID" value="ENSMUSG00000014402.16"/>
</dbReference>
<dbReference type="GeneID" id="22088"/>
<dbReference type="KEGG" id="mmu:22088"/>
<dbReference type="UCSC" id="uc009gzq.1">
    <property type="organism name" value="mouse"/>
</dbReference>
<dbReference type="AGR" id="MGI:106581"/>
<dbReference type="CTD" id="7251"/>
<dbReference type="MGI" id="MGI:106581">
    <property type="gene designation" value="Tsg101"/>
</dbReference>
<dbReference type="VEuPathDB" id="HostDB:ENSMUSG00000014402"/>
<dbReference type="eggNOG" id="KOG2391">
    <property type="taxonomic scope" value="Eukaryota"/>
</dbReference>
<dbReference type="GeneTree" id="ENSGT00940000153903"/>
<dbReference type="HOGENOM" id="CLU_017548_1_1_1"/>
<dbReference type="InParanoid" id="Q61187"/>
<dbReference type="OMA" id="YMNFPQP"/>
<dbReference type="OrthoDB" id="306304at2759"/>
<dbReference type="PhylomeDB" id="Q61187"/>
<dbReference type="TreeFam" id="TF312917"/>
<dbReference type="Reactome" id="R-MMU-917729">
    <property type="pathway name" value="Endosomal Sorting Complex Required For Transport (ESCRT)"/>
</dbReference>
<dbReference type="BioGRID-ORCS" id="22088">
    <property type="hits" value="28 hits in 85 CRISPR screens"/>
</dbReference>
<dbReference type="CD-CODE" id="01CA17F3">
    <property type="entry name" value="Centrosome"/>
</dbReference>
<dbReference type="CD-CODE" id="CE726F99">
    <property type="entry name" value="Postsynaptic density"/>
</dbReference>
<dbReference type="ChiTaRS" id="Tsg101">
    <property type="organism name" value="mouse"/>
</dbReference>
<dbReference type="PRO" id="PR:Q61187"/>
<dbReference type="Proteomes" id="UP000000589">
    <property type="component" value="Chromosome 7"/>
</dbReference>
<dbReference type="RNAct" id="Q61187">
    <property type="molecule type" value="protein"/>
</dbReference>
<dbReference type="Bgee" id="ENSMUSG00000014402">
    <property type="expression patterns" value="Expressed in cortical plate and 252 other cell types or tissues"/>
</dbReference>
<dbReference type="ExpressionAtlas" id="Q61187">
    <property type="expression patterns" value="baseline and differential"/>
</dbReference>
<dbReference type="GO" id="GO:0005813">
    <property type="term" value="C:centrosome"/>
    <property type="evidence" value="ECO:0007669"/>
    <property type="project" value="UniProtKB-SubCell"/>
</dbReference>
<dbReference type="GO" id="GO:0005737">
    <property type="term" value="C:cytoplasm"/>
    <property type="evidence" value="ECO:0000314"/>
    <property type="project" value="UniProtKB"/>
</dbReference>
<dbReference type="GO" id="GO:0005829">
    <property type="term" value="C:cytosol"/>
    <property type="evidence" value="ECO:0007669"/>
    <property type="project" value="Ensembl"/>
</dbReference>
<dbReference type="GO" id="GO:0031901">
    <property type="term" value="C:early endosome membrane"/>
    <property type="evidence" value="ECO:0007669"/>
    <property type="project" value="UniProtKB-SubCell"/>
</dbReference>
<dbReference type="GO" id="GO:0000813">
    <property type="term" value="C:ESCRT I complex"/>
    <property type="evidence" value="ECO:0000250"/>
    <property type="project" value="UniProtKB"/>
</dbReference>
<dbReference type="GO" id="GO:0070062">
    <property type="term" value="C:extracellular exosome"/>
    <property type="evidence" value="ECO:0000314"/>
    <property type="project" value="MGI"/>
</dbReference>
<dbReference type="GO" id="GO:0090543">
    <property type="term" value="C:Flemming body"/>
    <property type="evidence" value="ECO:0007669"/>
    <property type="project" value="UniProtKB-SubCell"/>
</dbReference>
<dbReference type="GO" id="GO:0031902">
    <property type="term" value="C:late endosome membrane"/>
    <property type="evidence" value="ECO:0007669"/>
    <property type="project" value="UniProtKB-SubCell"/>
</dbReference>
<dbReference type="GO" id="GO:0005730">
    <property type="term" value="C:nucleolus"/>
    <property type="evidence" value="ECO:0007669"/>
    <property type="project" value="Ensembl"/>
</dbReference>
<dbReference type="GO" id="GO:0005634">
    <property type="term" value="C:nucleus"/>
    <property type="evidence" value="ECO:0000305"/>
    <property type="project" value="MGI"/>
</dbReference>
<dbReference type="GO" id="GO:0005886">
    <property type="term" value="C:plasma membrane"/>
    <property type="evidence" value="ECO:0007669"/>
    <property type="project" value="Ensembl"/>
</dbReference>
<dbReference type="GO" id="GO:0048306">
    <property type="term" value="F:calcium-dependent protein binding"/>
    <property type="evidence" value="ECO:0007669"/>
    <property type="project" value="Ensembl"/>
</dbReference>
<dbReference type="GO" id="GO:0042803">
    <property type="term" value="F:protein homodimerization activity"/>
    <property type="evidence" value="ECO:0007669"/>
    <property type="project" value="Ensembl"/>
</dbReference>
<dbReference type="GO" id="GO:0044877">
    <property type="term" value="F:protein-containing complex binding"/>
    <property type="evidence" value="ECO:0007669"/>
    <property type="project" value="Ensembl"/>
</dbReference>
<dbReference type="GO" id="GO:0003714">
    <property type="term" value="F:transcription corepressor activity"/>
    <property type="evidence" value="ECO:0000314"/>
    <property type="project" value="MGI"/>
</dbReference>
<dbReference type="GO" id="GO:0043130">
    <property type="term" value="F:ubiquitin binding"/>
    <property type="evidence" value="ECO:0007669"/>
    <property type="project" value="Ensembl"/>
</dbReference>
<dbReference type="GO" id="GO:0031625">
    <property type="term" value="F:ubiquitin protein ligase binding"/>
    <property type="evidence" value="ECO:0007669"/>
    <property type="project" value="Ensembl"/>
</dbReference>
<dbReference type="GO" id="GO:0046790">
    <property type="term" value="F:virion binding"/>
    <property type="evidence" value="ECO:0007669"/>
    <property type="project" value="Ensembl"/>
</dbReference>
<dbReference type="GO" id="GO:0030154">
    <property type="term" value="P:cell differentiation"/>
    <property type="evidence" value="ECO:0000314"/>
    <property type="project" value="MGI"/>
</dbReference>
<dbReference type="GO" id="GO:0051301">
    <property type="term" value="P:cell division"/>
    <property type="evidence" value="ECO:0007669"/>
    <property type="project" value="UniProtKB-KW"/>
</dbReference>
<dbReference type="GO" id="GO:1990182">
    <property type="term" value="P:exosomal secretion"/>
    <property type="evidence" value="ECO:0000315"/>
    <property type="project" value="ParkinsonsUK-UCL"/>
</dbReference>
<dbReference type="GO" id="GO:0006858">
    <property type="term" value="P:extracellular transport"/>
    <property type="evidence" value="ECO:0007669"/>
    <property type="project" value="Ensembl"/>
</dbReference>
<dbReference type="GO" id="GO:0030216">
    <property type="term" value="P:keratinocyte differentiation"/>
    <property type="evidence" value="ECO:0000314"/>
    <property type="project" value="MGI"/>
</dbReference>
<dbReference type="GO" id="GO:0008285">
    <property type="term" value="P:negative regulation of cell population proliferation"/>
    <property type="evidence" value="ECO:0000314"/>
    <property type="project" value="MGI"/>
</dbReference>
<dbReference type="GO" id="GO:0042059">
    <property type="term" value="P:negative regulation of epidermal growth factor receptor signaling pathway"/>
    <property type="evidence" value="ECO:0007669"/>
    <property type="project" value="Ensembl"/>
</dbReference>
<dbReference type="GO" id="GO:0000122">
    <property type="term" value="P:negative regulation of transcription by RNA polymerase II"/>
    <property type="evidence" value="ECO:0000314"/>
    <property type="project" value="MGI"/>
</dbReference>
<dbReference type="GO" id="GO:1903543">
    <property type="term" value="P:positive regulation of exosomal secretion"/>
    <property type="evidence" value="ECO:0007669"/>
    <property type="project" value="Ensembl"/>
</dbReference>
<dbReference type="GO" id="GO:2000397">
    <property type="term" value="P:positive regulation of ubiquitin-dependent endocytosis"/>
    <property type="evidence" value="ECO:0000315"/>
    <property type="project" value="UniProtKB"/>
</dbReference>
<dbReference type="GO" id="GO:1903774">
    <property type="term" value="P:positive regulation of viral budding via host ESCRT complex"/>
    <property type="evidence" value="ECO:0007669"/>
    <property type="project" value="Ensembl"/>
</dbReference>
<dbReference type="GO" id="GO:0036211">
    <property type="term" value="P:protein modification process"/>
    <property type="evidence" value="ECO:0007669"/>
    <property type="project" value="InterPro"/>
</dbReference>
<dbReference type="GO" id="GO:0015031">
    <property type="term" value="P:protein transport"/>
    <property type="evidence" value="ECO:0007669"/>
    <property type="project" value="UniProtKB-KW"/>
</dbReference>
<dbReference type="GO" id="GO:0051726">
    <property type="term" value="P:regulation of cell cycle"/>
    <property type="evidence" value="ECO:0000314"/>
    <property type="project" value="MGI"/>
</dbReference>
<dbReference type="GO" id="GO:0001558">
    <property type="term" value="P:regulation of cell growth"/>
    <property type="evidence" value="ECO:0000314"/>
    <property type="project" value="MGI"/>
</dbReference>
<dbReference type="GO" id="GO:1903551">
    <property type="term" value="P:regulation of extracellular exosome assembly"/>
    <property type="evidence" value="ECO:0007669"/>
    <property type="project" value="Ensembl"/>
</dbReference>
<dbReference type="GO" id="GO:0043162">
    <property type="term" value="P:ubiquitin-dependent protein catabolic process via the multivesicular body sorting pathway"/>
    <property type="evidence" value="ECO:0000250"/>
    <property type="project" value="UniProtKB"/>
</dbReference>
<dbReference type="GO" id="GO:0046755">
    <property type="term" value="P:viral budding"/>
    <property type="evidence" value="ECO:0000315"/>
    <property type="project" value="UniProtKB"/>
</dbReference>
<dbReference type="GO" id="GO:0019076">
    <property type="term" value="P:viral release from host cell"/>
    <property type="evidence" value="ECO:0007669"/>
    <property type="project" value="Ensembl"/>
</dbReference>
<dbReference type="CDD" id="cd11685">
    <property type="entry name" value="UEV_TSG101-like"/>
    <property type="match status" value="1"/>
</dbReference>
<dbReference type="FunFam" id="3.10.110.10:FF:000040">
    <property type="entry name" value="tumor susceptibility gene 101 protein"/>
    <property type="match status" value="1"/>
</dbReference>
<dbReference type="Gene3D" id="6.10.140.820">
    <property type="match status" value="1"/>
</dbReference>
<dbReference type="Gene3D" id="6.10.250.370">
    <property type="match status" value="1"/>
</dbReference>
<dbReference type="Gene3D" id="3.10.110.10">
    <property type="entry name" value="Ubiquitin Conjugating Enzyme"/>
    <property type="match status" value="1"/>
</dbReference>
<dbReference type="InterPro" id="IPR052070">
    <property type="entry name" value="ESCRT-I_UEV_domain"/>
</dbReference>
<dbReference type="InterPro" id="IPR037202">
    <property type="entry name" value="ESCRT_assembly_dom"/>
</dbReference>
<dbReference type="InterPro" id="IPR017916">
    <property type="entry name" value="SB_dom"/>
</dbReference>
<dbReference type="InterPro" id="IPR016135">
    <property type="entry name" value="UBQ-conjugating_enzyme/RWD"/>
</dbReference>
<dbReference type="InterPro" id="IPR008883">
    <property type="entry name" value="UEV_N"/>
</dbReference>
<dbReference type="PANTHER" id="PTHR23306:SF17">
    <property type="entry name" value="TUMOR SUSCEPTIBILITY GENE 101 PROTEIN"/>
    <property type="match status" value="1"/>
</dbReference>
<dbReference type="PANTHER" id="PTHR23306">
    <property type="entry name" value="TUMOR SUSCEPTIBILITY GENE 101 PROTEIN-RELATED"/>
    <property type="match status" value="1"/>
</dbReference>
<dbReference type="Pfam" id="PF05743">
    <property type="entry name" value="UEV"/>
    <property type="match status" value="1"/>
</dbReference>
<dbReference type="Pfam" id="PF09454">
    <property type="entry name" value="Vps23_core"/>
    <property type="match status" value="1"/>
</dbReference>
<dbReference type="SMART" id="SM00212">
    <property type="entry name" value="UBCc"/>
    <property type="match status" value="1"/>
</dbReference>
<dbReference type="SUPFAM" id="SSF140111">
    <property type="entry name" value="Endosomal sorting complex assembly domain"/>
    <property type="match status" value="1"/>
</dbReference>
<dbReference type="SUPFAM" id="SSF54495">
    <property type="entry name" value="UBC-like"/>
    <property type="match status" value="1"/>
</dbReference>
<dbReference type="PROSITE" id="PS51312">
    <property type="entry name" value="SB"/>
    <property type="match status" value="1"/>
</dbReference>
<dbReference type="PROSITE" id="PS51322">
    <property type="entry name" value="UEV"/>
    <property type="match status" value="1"/>
</dbReference>
<keyword id="KW-0007">Acetylation</keyword>
<keyword id="KW-0131">Cell cycle</keyword>
<keyword id="KW-0132">Cell division</keyword>
<keyword id="KW-0175">Coiled coil</keyword>
<keyword id="KW-0963">Cytoplasm</keyword>
<keyword id="KW-0206">Cytoskeleton</keyword>
<keyword id="KW-0967">Endosome</keyword>
<keyword id="KW-0341">Growth regulation</keyword>
<keyword id="KW-0945">Host-virus interaction</keyword>
<keyword id="KW-0472">Membrane</keyword>
<keyword id="KW-0539">Nucleus</keyword>
<keyword id="KW-0597">Phosphoprotein</keyword>
<keyword id="KW-0653">Protein transport</keyword>
<keyword id="KW-1185">Reference proteome</keyword>
<keyword id="KW-0813">Transport</keyword>
<keyword id="KW-0832">Ubl conjugation</keyword>
<organism>
    <name type="scientific">Mus musculus</name>
    <name type="common">Mouse</name>
    <dbReference type="NCBI Taxonomy" id="10090"/>
    <lineage>
        <taxon>Eukaryota</taxon>
        <taxon>Metazoa</taxon>
        <taxon>Chordata</taxon>
        <taxon>Craniata</taxon>
        <taxon>Vertebrata</taxon>
        <taxon>Euteleostomi</taxon>
        <taxon>Mammalia</taxon>
        <taxon>Eutheria</taxon>
        <taxon>Euarchontoglires</taxon>
        <taxon>Glires</taxon>
        <taxon>Rodentia</taxon>
        <taxon>Myomorpha</taxon>
        <taxon>Muroidea</taxon>
        <taxon>Muridae</taxon>
        <taxon>Murinae</taxon>
        <taxon>Mus</taxon>
        <taxon>Mus</taxon>
    </lineage>
</organism>
<feature type="initiator methionine" description="Removed" evidence="3">
    <location>
        <position position="1"/>
    </location>
</feature>
<feature type="chain" id="PRO_0000082607" description="Tumor susceptibility gene 101 protein">
    <location>
        <begin position="2"/>
        <end position="391"/>
    </location>
</feature>
<feature type="domain" description="UEV" evidence="6">
    <location>
        <begin position="2"/>
        <end position="145"/>
    </location>
</feature>
<feature type="domain" description="SB" evidence="5">
    <location>
        <begin position="323"/>
        <end position="391"/>
    </location>
</feature>
<feature type="region of interest" description="Interaction with CEP55" evidence="1">
    <location>
        <begin position="159"/>
        <end position="163"/>
    </location>
</feature>
<feature type="region of interest" description="Disordered" evidence="7">
    <location>
        <begin position="197"/>
        <end position="220"/>
    </location>
</feature>
<feature type="coiled-coil region" evidence="4">
    <location>
        <begin position="237"/>
        <end position="317"/>
    </location>
</feature>
<feature type="short sequence motif" description="PTAP/PSAP motif">
    <location>
        <begin position="321"/>
        <end position="324"/>
    </location>
</feature>
<feature type="compositionally biased region" description="Polar residues" evidence="7">
    <location>
        <begin position="200"/>
        <end position="215"/>
    </location>
</feature>
<feature type="modified residue" description="N-acetylalanine" evidence="3">
    <location>
        <position position="2"/>
    </location>
</feature>
<feature type="modified residue" description="Phosphothreonine" evidence="3">
    <location>
        <position position="221"/>
    </location>
</feature>
<evidence type="ECO:0000250" key="1"/>
<evidence type="ECO:0000250" key="2">
    <source>
        <dbReference type="UniProtKB" id="Q6IRE4"/>
    </source>
</evidence>
<evidence type="ECO:0000250" key="3">
    <source>
        <dbReference type="UniProtKB" id="Q99816"/>
    </source>
</evidence>
<evidence type="ECO:0000255" key="4"/>
<evidence type="ECO:0000255" key="5">
    <source>
        <dbReference type="PROSITE-ProRule" id="PRU00644"/>
    </source>
</evidence>
<evidence type="ECO:0000255" key="6">
    <source>
        <dbReference type="PROSITE-ProRule" id="PRU00652"/>
    </source>
</evidence>
<evidence type="ECO:0000256" key="7">
    <source>
        <dbReference type="SAM" id="MobiDB-lite"/>
    </source>
</evidence>
<evidence type="ECO:0000269" key="8">
    <source>
    </source>
</evidence>
<evidence type="ECO:0000269" key="9">
    <source>
    </source>
</evidence>
<evidence type="ECO:0000269" key="10">
    <source>
    </source>
</evidence>
<evidence type="ECO:0000269" key="11">
    <source>
    </source>
</evidence>
<evidence type="ECO:0000269" key="12">
    <source>
    </source>
</evidence>
<evidence type="ECO:0000305" key="13"/>
<protein>
    <recommendedName>
        <fullName>Tumor susceptibility gene 101 protein</fullName>
    </recommendedName>
    <alternativeName>
        <fullName>ESCRT-I complex subunit TSG101</fullName>
    </alternativeName>
</protein>
<gene>
    <name type="primary">Tsg101</name>
</gene>
<accession>Q61187</accession>
<reference key="1">
    <citation type="journal article" date="1996" name="Cell">
        <title>Tsg101: a novel tumor susceptibility gene isolated by controlled homozygous functional knockout of allelic loci in mammalian cells.</title>
        <authorList>
            <person name="Li L."/>
            <person name="Cohen S.N."/>
        </authorList>
    </citation>
    <scope>NUCLEOTIDE SEQUENCE [MRNA]</scope>
    <source>
        <tissue>Fibroblast</tissue>
    </source>
</reference>
<reference key="2">
    <citation type="journal article" date="1998" name="Oncogene">
        <title>Genomic architecture and transcriptional activation of the mouse and human tumor susceptibility gene TSG101: common types of shorter transcripts are true alternative splice variants.</title>
        <authorList>
            <person name="Wagner K.-U."/>
            <person name="Dierisseau P."/>
            <person name="Rucker E.B. III"/>
            <person name="Robinson G.W."/>
            <person name="Hennighausen L."/>
        </authorList>
    </citation>
    <scope>NUCLEOTIDE SEQUENCE [GENOMIC DNA]</scope>
    <source>
        <strain>129/SvJ</strain>
        <tissue>Mammary gland</tissue>
    </source>
</reference>
<reference key="3">
    <citation type="journal article" date="2004" name="Genome Res.">
        <title>The status, quality, and expansion of the NIH full-length cDNA project: the Mammalian Gene Collection (MGC).</title>
        <authorList>
            <consortium name="The MGC Project Team"/>
        </authorList>
    </citation>
    <scope>NUCLEOTIDE SEQUENCE [LARGE SCALE MRNA]</scope>
    <source>
        <strain>C57BL/6J</strain>
        <strain>FVB/N</strain>
        <tissue>Colon</tissue>
        <tissue>Mammary gland</tissue>
    </source>
</reference>
<reference key="4">
    <citation type="journal article" date="2000" name="Nat. Genet.">
        <title>DNMT1 binds HDAC2 and a new co-repressor, DMAP1, to form a complex at replication foci.</title>
        <authorList>
            <person name="Rountree M.R."/>
            <person name="Bachman K.E."/>
            <person name="Baylin S.B."/>
        </authorList>
    </citation>
    <scope>INTERACTION WITH DMAP1</scope>
</reference>
<reference key="5">
    <citation type="journal article" date="2003" name="Biochem. Biophys. Res. Commun.">
        <title>Enhanced degradation of MDM2 by a nuclear envelope component, mouse germ cell-less.</title>
        <authorList>
            <person name="Masuhara M."/>
            <person name="Nagao K."/>
            <person name="Nishikawa M."/>
            <person name="Kimura T."/>
            <person name="Nakano T."/>
        </authorList>
    </citation>
    <scope>INTERACTION WITH GMCL</scope>
</reference>
<reference key="6">
    <citation type="journal article" date="2003" name="Proc. Natl. Acad. Sci. U.S.A.">
        <title>TSG101 interaction with HRS mediates endosomal trafficking and receptor down-regulation.</title>
        <authorList>
            <person name="Lu Q."/>
            <person name="Hope L.W."/>
            <person name="Brasch M."/>
            <person name="Reinhard C."/>
            <person name="Cohen S.N."/>
        </authorList>
    </citation>
    <scope>INTERACTION WITH HGS</scope>
</reference>
<reference key="7">
    <citation type="journal article" date="2005" name="J. Biol. Chem.">
        <title>Tsg101 and Alix interact with murine leukemia virus Gag and cooperate with Nedd4 ubiquitin ligases during budding.</title>
        <authorList>
            <person name="Segura-Morales C."/>
            <person name="Pescia C."/>
            <person name="Chatellard-Causse C."/>
            <person name="Sadoul R."/>
            <person name="Bertrand E."/>
            <person name="Basyuk E."/>
        </authorList>
    </citation>
    <scope>INTERACTION WITH MURINE LEUKEMIA VIRUS GAG POLYPROTEIN</scope>
</reference>
<reference key="8">
    <citation type="journal article" date="2009" name="Biochim. Biophys. Acta">
        <title>Abnormal regulation of TSG101 in mice with spongiform neurodegeneration.</title>
        <authorList>
            <person name="Jiao J."/>
            <person name="Sun K."/>
            <person name="Walker W.P."/>
            <person name="Bagher P."/>
            <person name="Cota C.D."/>
            <person name="Gunn T.M."/>
        </authorList>
    </citation>
    <scope>INTERACTION WITH MGRN1</scope>
    <scope>UBIQUITINATION BY MGRN1</scope>
</reference>
<reference key="9">
    <citation type="journal article" date="2010" name="Cell">
        <title>A tissue-specific atlas of mouse protein phosphorylation and expression.</title>
        <authorList>
            <person name="Huttlin E.L."/>
            <person name="Jedrychowski M.P."/>
            <person name="Elias J.E."/>
            <person name="Goswami T."/>
            <person name="Rad R."/>
            <person name="Beausoleil S.A."/>
            <person name="Villen J."/>
            <person name="Haas W."/>
            <person name="Sowa M.E."/>
            <person name="Gygi S.P."/>
        </authorList>
    </citation>
    <scope>IDENTIFICATION BY MASS SPECTROMETRY [LARGE SCALE ANALYSIS]</scope>
    <source>
        <tissue>Brain</tissue>
        <tissue>Heart</tissue>
        <tissue>Kidney</tissue>
        <tissue>Lung</tissue>
        <tissue>Pancreas</tissue>
        <tissue>Spleen</tissue>
        <tissue>Testis</tissue>
    </source>
</reference>
<sequence length="391" mass="44124">MAVSESQLKKMMSKYKYRDLTVRQTVNVIAMYKDLKPVLDSYVFNDGSSRELVNLTGTIPVRYRGNIYNIPICLWLLDTYPYNPPICFVKPTSSMTIKTGKHVDANGKIYLPYLHDWKHPRSELLELIQIMIVIFGEEPPVFSRPTVSASYPPYTATGPPNTSYMPGMPSGISAYPSGYPPNPSGYPGCPYPPAGPYPATTSSQYPSQPPVTTVGPSRDGTISEDTIRASLISAVSDKLRWRMKEEMDGAQAELNALKRTEEDLKKGHQKLEEMVTRLDQEVAEVDKNIELLKKKDEELSSALEKMENQSENNDIDEVIIPTAPLYKQILNLYAEENAIEDTIFYLGEALRRGVIDLDVFLKHVRLLSRKQFQLRALMQKARKTAGLSDLY</sequence>